<dbReference type="EC" id="5.4.99.25" evidence="1"/>
<dbReference type="EMBL" id="AM233362">
    <property type="protein sequence ID" value="CAJ78995.1"/>
    <property type="molecule type" value="Genomic_DNA"/>
</dbReference>
<dbReference type="RefSeq" id="WP_003014912.1">
    <property type="nucleotide sequence ID" value="NZ_CP009694.1"/>
</dbReference>
<dbReference type="SMR" id="Q2A4N1"/>
<dbReference type="KEGG" id="ftl:FTL_0555"/>
<dbReference type="Proteomes" id="UP000001944">
    <property type="component" value="Chromosome"/>
</dbReference>
<dbReference type="GO" id="GO:0003723">
    <property type="term" value="F:RNA binding"/>
    <property type="evidence" value="ECO:0007669"/>
    <property type="project" value="InterPro"/>
</dbReference>
<dbReference type="GO" id="GO:0160148">
    <property type="term" value="F:tRNA pseudouridine(55) synthase activity"/>
    <property type="evidence" value="ECO:0007669"/>
    <property type="project" value="UniProtKB-EC"/>
</dbReference>
<dbReference type="GO" id="GO:1990481">
    <property type="term" value="P:mRNA pseudouridine synthesis"/>
    <property type="evidence" value="ECO:0007669"/>
    <property type="project" value="TreeGrafter"/>
</dbReference>
<dbReference type="GO" id="GO:0031119">
    <property type="term" value="P:tRNA pseudouridine synthesis"/>
    <property type="evidence" value="ECO:0007669"/>
    <property type="project" value="UniProtKB-UniRule"/>
</dbReference>
<dbReference type="CDD" id="cd02573">
    <property type="entry name" value="PseudoU_synth_EcTruB"/>
    <property type="match status" value="1"/>
</dbReference>
<dbReference type="FunFam" id="3.30.2350.10:FF:000011">
    <property type="entry name" value="tRNA pseudouridine synthase B"/>
    <property type="match status" value="1"/>
</dbReference>
<dbReference type="Gene3D" id="3.30.2350.10">
    <property type="entry name" value="Pseudouridine synthase"/>
    <property type="match status" value="1"/>
</dbReference>
<dbReference type="HAMAP" id="MF_01080">
    <property type="entry name" value="TruB_bact"/>
    <property type="match status" value="1"/>
</dbReference>
<dbReference type="InterPro" id="IPR020103">
    <property type="entry name" value="PsdUridine_synth_cat_dom_sf"/>
</dbReference>
<dbReference type="InterPro" id="IPR002501">
    <property type="entry name" value="PsdUridine_synth_N"/>
</dbReference>
<dbReference type="InterPro" id="IPR014780">
    <property type="entry name" value="tRNA_psdUridine_synth_TruB"/>
</dbReference>
<dbReference type="InterPro" id="IPR032819">
    <property type="entry name" value="TruB_C"/>
</dbReference>
<dbReference type="NCBIfam" id="TIGR00431">
    <property type="entry name" value="TruB"/>
    <property type="match status" value="1"/>
</dbReference>
<dbReference type="PANTHER" id="PTHR13767:SF2">
    <property type="entry name" value="PSEUDOURIDYLATE SYNTHASE TRUB1"/>
    <property type="match status" value="1"/>
</dbReference>
<dbReference type="PANTHER" id="PTHR13767">
    <property type="entry name" value="TRNA-PSEUDOURIDINE SYNTHASE"/>
    <property type="match status" value="1"/>
</dbReference>
<dbReference type="Pfam" id="PF16198">
    <property type="entry name" value="TruB_C_2"/>
    <property type="match status" value="1"/>
</dbReference>
<dbReference type="Pfam" id="PF01509">
    <property type="entry name" value="TruB_N"/>
    <property type="match status" value="1"/>
</dbReference>
<dbReference type="SUPFAM" id="SSF55120">
    <property type="entry name" value="Pseudouridine synthase"/>
    <property type="match status" value="1"/>
</dbReference>
<accession>Q2A4N1</accession>
<gene>
    <name evidence="1" type="primary">truB</name>
    <name type="ordered locus">FTL_0555</name>
</gene>
<proteinExistence type="inferred from homology"/>
<keyword id="KW-0413">Isomerase</keyword>
<keyword id="KW-1185">Reference proteome</keyword>
<keyword id="KW-0819">tRNA processing</keyword>
<protein>
    <recommendedName>
        <fullName evidence="1">tRNA pseudouridine synthase B</fullName>
        <ecNumber evidence="1">5.4.99.25</ecNumber>
    </recommendedName>
    <alternativeName>
        <fullName evidence="1">tRNA pseudouridine(55) synthase</fullName>
        <shortName evidence="1">Psi55 synthase</shortName>
    </alternativeName>
    <alternativeName>
        <fullName evidence="1">tRNA pseudouridylate synthase</fullName>
    </alternativeName>
    <alternativeName>
        <fullName evidence="1">tRNA-uridine isomerase</fullName>
    </alternativeName>
</protein>
<organism>
    <name type="scientific">Francisella tularensis subsp. holarctica (strain LVS)</name>
    <dbReference type="NCBI Taxonomy" id="376619"/>
    <lineage>
        <taxon>Bacteria</taxon>
        <taxon>Pseudomonadati</taxon>
        <taxon>Pseudomonadota</taxon>
        <taxon>Gammaproteobacteria</taxon>
        <taxon>Thiotrichales</taxon>
        <taxon>Francisellaceae</taxon>
        <taxon>Francisella</taxon>
    </lineage>
</organism>
<reference key="1">
    <citation type="submission" date="2006-03" db="EMBL/GenBank/DDBJ databases">
        <title>Complete genome sequence of Francisella tularensis LVS (Live Vaccine Strain).</title>
        <authorList>
            <person name="Chain P."/>
            <person name="Larimer F."/>
            <person name="Land M."/>
            <person name="Stilwagen S."/>
            <person name="Larsson P."/>
            <person name="Bearden S."/>
            <person name="Chu M."/>
            <person name="Oyston P."/>
            <person name="Forsman M."/>
            <person name="Andersson S."/>
            <person name="Lindler L."/>
            <person name="Titball R."/>
            <person name="Garcia E."/>
        </authorList>
    </citation>
    <scope>NUCLEOTIDE SEQUENCE [LARGE SCALE GENOMIC DNA]</scope>
    <source>
        <strain>LVS</strain>
    </source>
</reference>
<comment type="function">
    <text evidence="1">Responsible for synthesis of pseudouridine from uracil-55 in the psi GC loop of transfer RNAs.</text>
</comment>
<comment type="catalytic activity">
    <reaction evidence="1">
        <text>uridine(55) in tRNA = pseudouridine(55) in tRNA</text>
        <dbReference type="Rhea" id="RHEA:42532"/>
        <dbReference type="Rhea" id="RHEA-COMP:10101"/>
        <dbReference type="Rhea" id="RHEA-COMP:10102"/>
        <dbReference type="ChEBI" id="CHEBI:65314"/>
        <dbReference type="ChEBI" id="CHEBI:65315"/>
        <dbReference type="EC" id="5.4.99.25"/>
    </reaction>
</comment>
<comment type="similarity">
    <text evidence="1">Belongs to the pseudouridine synthase TruB family. Type 1 subfamily.</text>
</comment>
<feature type="chain" id="PRO_1000084595" description="tRNA pseudouridine synthase B">
    <location>
        <begin position="1"/>
        <end position="302"/>
    </location>
</feature>
<feature type="active site" description="Nucleophile" evidence="1">
    <location>
        <position position="45"/>
    </location>
</feature>
<name>TRUB_FRATH</name>
<sequence>MKKNRLNLNGVVVINKAKDISSNKVLQQLKYLFNAQKAGHTGTLDPMATGVLPICFGRATKIAQYLLDADKEYIATIRLGIETDSGDAEGEIIAKSINIPELSAEYLEIVLAKFSGDVVQIPPMYSALKYNGQPLYKLAREGKTVEVKSRNIKIYELELLEFNIDSLKIRVKCSKGTYIRSLAIDIGKTLGCGGHLIALQRTQSGPFKLSEAFRLEQLKDLSFEQKIASITNIESVFIDKPIYSLLEEEKNDLYKRGLFADKPHLDGTVRIYDVEKFVAIAEFDKGKLINKKFFDQDILISE</sequence>
<evidence type="ECO:0000255" key="1">
    <source>
        <dbReference type="HAMAP-Rule" id="MF_01080"/>
    </source>
</evidence>